<dbReference type="EC" id="2.7.1.36" evidence="1"/>
<dbReference type="EMBL" id="CP001398">
    <property type="protein sequence ID" value="ACS34230.1"/>
    <property type="molecule type" value="Genomic_DNA"/>
</dbReference>
<dbReference type="RefSeq" id="WP_015859340.1">
    <property type="nucleotide sequence ID" value="NC_012804.1"/>
</dbReference>
<dbReference type="SMR" id="C5A7L8"/>
<dbReference type="STRING" id="593117.TGAM_1728"/>
<dbReference type="PaxDb" id="593117-TGAM_1728"/>
<dbReference type="GeneID" id="7987447"/>
<dbReference type="KEGG" id="tga:TGAM_1728"/>
<dbReference type="PATRIC" id="fig|593117.10.peg.1735"/>
<dbReference type="eggNOG" id="arCOG01028">
    <property type="taxonomic scope" value="Archaea"/>
</dbReference>
<dbReference type="HOGENOM" id="CLU_017814_0_0_2"/>
<dbReference type="OrthoDB" id="19001at2157"/>
<dbReference type="UniPathway" id="UPA00057">
    <property type="reaction ID" value="UER00098"/>
</dbReference>
<dbReference type="Proteomes" id="UP000001488">
    <property type="component" value="Chromosome"/>
</dbReference>
<dbReference type="GO" id="GO:0005829">
    <property type="term" value="C:cytosol"/>
    <property type="evidence" value="ECO:0007669"/>
    <property type="project" value="TreeGrafter"/>
</dbReference>
<dbReference type="GO" id="GO:0005524">
    <property type="term" value="F:ATP binding"/>
    <property type="evidence" value="ECO:0007669"/>
    <property type="project" value="UniProtKB-UniRule"/>
</dbReference>
<dbReference type="GO" id="GO:0000287">
    <property type="term" value="F:magnesium ion binding"/>
    <property type="evidence" value="ECO:0007669"/>
    <property type="project" value="UniProtKB-UniRule"/>
</dbReference>
<dbReference type="GO" id="GO:0004496">
    <property type="term" value="F:mevalonate kinase activity"/>
    <property type="evidence" value="ECO:0007669"/>
    <property type="project" value="UniProtKB-UniRule"/>
</dbReference>
<dbReference type="GO" id="GO:0019287">
    <property type="term" value="P:isopentenyl diphosphate biosynthetic process, mevalonate pathway"/>
    <property type="evidence" value="ECO:0007669"/>
    <property type="project" value="UniProtKB-UniRule"/>
</dbReference>
<dbReference type="FunFam" id="3.30.230.10:FF:000151">
    <property type="entry name" value="Mevalonate kinase"/>
    <property type="match status" value="1"/>
</dbReference>
<dbReference type="Gene3D" id="3.30.230.10">
    <property type="match status" value="1"/>
</dbReference>
<dbReference type="Gene3D" id="3.30.70.890">
    <property type="entry name" value="GHMP kinase, C-terminal domain"/>
    <property type="match status" value="1"/>
</dbReference>
<dbReference type="HAMAP" id="MF_00217">
    <property type="entry name" value="Mevalonate_kinase"/>
    <property type="match status" value="1"/>
</dbReference>
<dbReference type="InterPro" id="IPR013750">
    <property type="entry name" value="GHMP_kinase_C_dom"/>
</dbReference>
<dbReference type="InterPro" id="IPR036554">
    <property type="entry name" value="GHMP_kinase_C_sf"/>
</dbReference>
<dbReference type="InterPro" id="IPR006204">
    <property type="entry name" value="GHMP_kinase_N_dom"/>
</dbReference>
<dbReference type="InterPro" id="IPR006203">
    <property type="entry name" value="GHMP_knse_ATP-bd_CS"/>
</dbReference>
<dbReference type="InterPro" id="IPR006205">
    <property type="entry name" value="Mev_gal_kin"/>
</dbReference>
<dbReference type="InterPro" id="IPR022937">
    <property type="entry name" value="Mevalonate_kinase_arc"/>
</dbReference>
<dbReference type="InterPro" id="IPR020568">
    <property type="entry name" value="Ribosomal_Su5_D2-typ_SF"/>
</dbReference>
<dbReference type="InterPro" id="IPR014721">
    <property type="entry name" value="Ribsml_uS5_D2-typ_fold_subgr"/>
</dbReference>
<dbReference type="NCBIfam" id="TIGR00549">
    <property type="entry name" value="mevalon_kin"/>
    <property type="match status" value="1"/>
</dbReference>
<dbReference type="NCBIfam" id="NF003036">
    <property type="entry name" value="PRK03926.1"/>
    <property type="match status" value="1"/>
</dbReference>
<dbReference type="PANTHER" id="PTHR43290">
    <property type="entry name" value="MEVALONATE KINASE"/>
    <property type="match status" value="1"/>
</dbReference>
<dbReference type="PANTHER" id="PTHR43290:SF2">
    <property type="entry name" value="MEVALONATE KINASE"/>
    <property type="match status" value="1"/>
</dbReference>
<dbReference type="Pfam" id="PF08544">
    <property type="entry name" value="GHMP_kinases_C"/>
    <property type="match status" value="1"/>
</dbReference>
<dbReference type="Pfam" id="PF00288">
    <property type="entry name" value="GHMP_kinases_N"/>
    <property type="match status" value="1"/>
</dbReference>
<dbReference type="PRINTS" id="PR00959">
    <property type="entry name" value="MEVGALKINASE"/>
</dbReference>
<dbReference type="SUPFAM" id="SSF55060">
    <property type="entry name" value="GHMP Kinase, C-terminal domain"/>
    <property type="match status" value="1"/>
</dbReference>
<dbReference type="SUPFAM" id="SSF54211">
    <property type="entry name" value="Ribosomal protein S5 domain 2-like"/>
    <property type="match status" value="1"/>
</dbReference>
<dbReference type="PROSITE" id="PS00627">
    <property type="entry name" value="GHMP_KINASES_ATP"/>
    <property type="match status" value="1"/>
</dbReference>
<reference key="1">
    <citation type="journal article" date="2007" name="Genome Biol.">
        <title>Genome analysis and genome-wide proteomics of Thermococcus gammatolerans, the most radioresistant organism known amongst the Archaea.</title>
        <authorList>
            <person name="Zivanovic Y."/>
            <person name="Armengaud J."/>
            <person name="Lagorce A."/>
            <person name="Leplat C."/>
            <person name="Guerin P."/>
            <person name="Dutertre M."/>
            <person name="Anthouard V."/>
            <person name="Forterre P."/>
            <person name="Wincker P."/>
            <person name="Confalonieri F."/>
        </authorList>
    </citation>
    <scope>NUCLEOTIDE SEQUENCE [LARGE SCALE GENOMIC DNA]</scope>
    <source>
        <strain>DSM 15229 / JCM 11827 / EJ3</strain>
    </source>
</reference>
<feature type="chain" id="PRO_1000204227" description="Mevalonate kinase">
    <location>
        <begin position="1"/>
        <end position="334"/>
    </location>
</feature>
<feature type="active site" description="Proton acceptor" evidence="1">
    <location>
        <position position="161"/>
    </location>
</feature>
<feature type="binding site" evidence="1">
    <location>
        <begin position="110"/>
        <end position="120"/>
    </location>
    <ligand>
        <name>ATP</name>
        <dbReference type="ChEBI" id="CHEBI:30616"/>
    </ligand>
</feature>
<protein>
    <recommendedName>
        <fullName evidence="1">Mevalonate kinase</fullName>
        <shortName evidence="1">MK</shortName>
        <shortName evidence="1">MVK</shortName>
        <ecNumber evidence="1">2.7.1.36</ecNumber>
    </recommendedName>
</protein>
<organism>
    <name type="scientific">Thermococcus gammatolerans (strain DSM 15229 / JCM 11827 / EJ3)</name>
    <dbReference type="NCBI Taxonomy" id="593117"/>
    <lineage>
        <taxon>Archaea</taxon>
        <taxon>Methanobacteriati</taxon>
        <taxon>Methanobacteriota</taxon>
        <taxon>Thermococci</taxon>
        <taxon>Thermococcales</taxon>
        <taxon>Thermococcaceae</taxon>
        <taxon>Thermococcus</taxon>
    </lineage>
</organism>
<gene>
    <name evidence="1" type="primary">mvk</name>
    <name type="ordered locus">TGAM_1728</name>
</gene>
<sequence>MRVLASAPAKIILFGEHSVVYGKPAIAAAINLRTYVWAEFNERGAIKIEAKDIRVPGLTVSFSEDEIYFESDYGKAAEVLSYVRQAIELVREEADKNGRGITVSITSQIPVGAGLGSSAAVAVATIGAVSRLLGLELTNEEIGKLGHRVELLVQGASSGIDPTVSAIGGFIHYEKGKFEPLPFMELPIVVGYTGSSGSTKELVAMVRRTREEMPEIIEPILLSMGKVVEKAKEILLSDLEEKIRFERLGKLMNINHGLLDALGVSTKKLSELVYAARTAGALGAKITGAGGGGCMYALAPEKQSEVATAITIAGGTPMITEISKEGLRIEEVIP</sequence>
<proteinExistence type="inferred from homology"/>
<comment type="function">
    <text evidence="1">Catalyzes the phosphorylation of (R)-mevalonate (MVA) to (R)-mevalonate 5-phosphate (MVAP). Functions in the mevalonate (MVA) pathway leading to isopentenyl diphosphate (IPP), a key precursor for the biosynthesis of isoprenoid compounds such as archaeal membrane lipids.</text>
</comment>
<comment type="catalytic activity">
    <reaction evidence="1">
        <text>(R)-mevalonate + ATP = (R)-5-phosphomevalonate + ADP + H(+)</text>
        <dbReference type="Rhea" id="RHEA:17065"/>
        <dbReference type="ChEBI" id="CHEBI:15378"/>
        <dbReference type="ChEBI" id="CHEBI:30616"/>
        <dbReference type="ChEBI" id="CHEBI:36464"/>
        <dbReference type="ChEBI" id="CHEBI:58146"/>
        <dbReference type="ChEBI" id="CHEBI:456216"/>
        <dbReference type="EC" id="2.7.1.36"/>
    </reaction>
</comment>
<comment type="cofactor">
    <cofactor evidence="1">
        <name>Mg(2+)</name>
        <dbReference type="ChEBI" id="CHEBI:18420"/>
    </cofactor>
</comment>
<comment type="pathway">
    <text evidence="1">Isoprenoid biosynthesis; isopentenyl diphosphate biosynthesis via mevalonate pathway; isopentenyl diphosphate from (R)-mevalonate: step 1/3.</text>
</comment>
<comment type="subunit">
    <text evidence="1">Homodimer.</text>
</comment>
<comment type="subcellular location">
    <subcellularLocation>
        <location evidence="1">Cytoplasm</location>
    </subcellularLocation>
</comment>
<comment type="similarity">
    <text evidence="1">Belongs to the GHMP kinase family. Mevalonate kinase subfamily.</text>
</comment>
<evidence type="ECO:0000255" key="1">
    <source>
        <dbReference type="HAMAP-Rule" id="MF_00217"/>
    </source>
</evidence>
<accession>C5A7L8</accession>
<keyword id="KW-0067">ATP-binding</keyword>
<keyword id="KW-0963">Cytoplasm</keyword>
<keyword id="KW-0414">Isoprene biosynthesis</keyword>
<keyword id="KW-0418">Kinase</keyword>
<keyword id="KW-0444">Lipid biosynthesis</keyword>
<keyword id="KW-0443">Lipid metabolism</keyword>
<keyword id="KW-0460">Magnesium</keyword>
<keyword id="KW-0547">Nucleotide-binding</keyword>
<keyword id="KW-1185">Reference proteome</keyword>
<keyword id="KW-0808">Transferase</keyword>
<name>MVK_THEGJ</name>